<feature type="chain" id="PRO_0000413337" description="Glutamyl-tRNA(Gln) amidotransferase subunit A, mitochondrial">
    <location>
        <begin position="1"/>
        <end position="507"/>
    </location>
</feature>
<feature type="active site" description="Charge relay system" evidence="1">
    <location>
        <position position="79"/>
    </location>
</feature>
<feature type="active site" description="Charge relay system" evidence="1">
    <location>
        <position position="160"/>
    </location>
</feature>
<feature type="active site" description="Acyl-ester intermediate" evidence="1">
    <location>
        <position position="184"/>
    </location>
</feature>
<dbReference type="EC" id="6.3.5.7" evidence="1"/>
<dbReference type="EMBL" id="CM000070">
    <property type="protein sequence ID" value="EAL26914.2"/>
    <property type="molecule type" value="Genomic_DNA"/>
</dbReference>
<dbReference type="RefSeq" id="XP_001357779.2">
    <property type="nucleotide sequence ID" value="XM_001357742.4"/>
</dbReference>
<dbReference type="SMR" id="Q29BT3"/>
<dbReference type="FunCoup" id="Q29BT3">
    <property type="interactions" value="799"/>
</dbReference>
<dbReference type="STRING" id="46245.Q29BT3"/>
<dbReference type="EnsemblMetazoa" id="FBtr0284775">
    <property type="protein sequence ID" value="FBpp0283213"/>
    <property type="gene ID" value="FBgn0079287"/>
</dbReference>
<dbReference type="GeneID" id="4800514"/>
<dbReference type="KEGG" id="dpo:4800514"/>
<dbReference type="CTD" id="42283"/>
<dbReference type="eggNOG" id="KOG1211">
    <property type="taxonomic scope" value="Eukaryota"/>
</dbReference>
<dbReference type="HOGENOM" id="CLU_009600_7_6_1"/>
<dbReference type="InParanoid" id="Q29BT3"/>
<dbReference type="OMA" id="QPASYCG"/>
<dbReference type="Proteomes" id="UP000001819">
    <property type="component" value="Chromosome 2"/>
</dbReference>
<dbReference type="Bgee" id="FBgn0079287">
    <property type="expression patterns" value="Expressed in female reproductive system and 2 other cell types or tissues"/>
</dbReference>
<dbReference type="GO" id="GO:0030956">
    <property type="term" value="C:glutamyl-tRNA(Gln) amidotransferase complex"/>
    <property type="evidence" value="ECO:0007669"/>
    <property type="project" value="UniProtKB-UniRule"/>
</dbReference>
<dbReference type="GO" id="GO:0005739">
    <property type="term" value="C:mitochondrion"/>
    <property type="evidence" value="ECO:0007669"/>
    <property type="project" value="UniProtKB-SubCell"/>
</dbReference>
<dbReference type="GO" id="GO:0005524">
    <property type="term" value="F:ATP binding"/>
    <property type="evidence" value="ECO:0007669"/>
    <property type="project" value="UniProtKB-KW"/>
</dbReference>
<dbReference type="GO" id="GO:0050567">
    <property type="term" value="F:glutaminyl-tRNA synthase (glutamine-hydrolyzing) activity"/>
    <property type="evidence" value="ECO:0007669"/>
    <property type="project" value="UniProtKB-UniRule"/>
</dbReference>
<dbReference type="GO" id="GO:0070681">
    <property type="term" value="P:glutaminyl-tRNAGln biosynthesis via transamidation"/>
    <property type="evidence" value="ECO:0007669"/>
    <property type="project" value="UniProtKB-UniRule"/>
</dbReference>
<dbReference type="GO" id="GO:0032543">
    <property type="term" value="P:mitochondrial translation"/>
    <property type="evidence" value="ECO:0007669"/>
    <property type="project" value="UniProtKB-UniRule"/>
</dbReference>
<dbReference type="Gene3D" id="3.90.1300.10">
    <property type="entry name" value="Amidase signature (AS) domain"/>
    <property type="match status" value="1"/>
</dbReference>
<dbReference type="HAMAP" id="MF_00120">
    <property type="entry name" value="GatA"/>
    <property type="match status" value="1"/>
</dbReference>
<dbReference type="InterPro" id="IPR000120">
    <property type="entry name" value="Amidase"/>
</dbReference>
<dbReference type="InterPro" id="IPR023631">
    <property type="entry name" value="Amidase_dom"/>
</dbReference>
<dbReference type="InterPro" id="IPR036928">
    <property type="entry name" value="AS_sf"/>
</dbReference>
<dbReference type="InterPro" id="IPR004412">
    <property type="entry name" value="GatA"/>
</dbReference>
<dbReference type="PANTHER" id="PTHR11895:SF7">
    <property type="entry name" value="GLUTAMYL-TRNA(GLN) AMIDOTRANSFERASE SUBUNIT A, MITOCHONDRIAL"/>
    <property type="match status" value="1"/>
</dbReference>
<dbReference type="PANTHER" id="PTHR11895">
    <property type="entry name" value="TRANSAMIDASE"/>
    <property type="match status" value="1"/>
</dbReference>
<dbReference type="Pfam" id="PF01425">
    <property type="entry name" value="Amidase"/>
    <property type="match status" value="1"/>
</dbReference>
<dbReference type="SUPFAM" id="SSF75304">
    <property type="entry name" value="Amidase signature (AS) enzymes"/>
    <property type="match status" value="1"/>
</dbReference>
<accession>Q29BT3</accession>
<protein>
    <recommendedName>
        <fullName evidence="1">Glutamyl-tRNA(Gln) amidotransferase subunit A, mitochondrial</fullName>
        <shortName evidence="1">Glu-AdT subunit A</shortName>
        <ecNumber evidence="1">6.3.5.7</ecNumber>
    </recommendedName>
</protein>
<gene>
    <name evidence="1" type="primary">GatA</name>
    <name type="ORF">GA19290</name>
</gene>
<organism>
    <name type="scientific">Drosophila pseudoobscura pseudoobscura</name>
    <name type="common">Fruit fly</name>
    <dbReference type="NCBI Taxonomy" id="46245"/>
    <lineage>
        <taxon>Eukaryota</taxon>
        <taxon>Metazoa</taxon>
        <taxon>Ecdysozoa</taxon>
        <taxon>Arthropoda</taxon>
        <taxon>Hexapoda</taxon>
        <taxon>Insecta</taxon>
        <taxon>Pterygota</taxon>
        <taxon>Neoptera</taxon>
        <taxon>Endopterygota</taxon>
        <taxon>Diptera</taxon>
        <taxon>Brachycera</taxon>
        <taxon>Muscomorpha</taxon>
        <taxon>Ephydroidea</taxon>
        <taxon>Drosophilidae</taxon>
        <taxon>Drosophila</taxon>
        <taxon>Sophophora</taxon>
    </lineage>
</organism>
<comment type="function">
    <text evidence="1">Allows the formation of correctly charged Gln-tRNA(Gln) through the transamidation of misacylated Glu-tRNA(Gln) in the mitochondria. The reaction takes place in the presence of glutamine and ATP through an activated gamma-phospho-Glu-tRNA(Gln).</text>
</comment>
<comment type="catalytic activity">
    <reaction evidence="1">
        <text>L-glutamyl-tRNA(Gln) + L-glutamine + ATP + H2O = L-glutaminyl-tRNA(Gln) + L-glutamate + ADP + phosphate + H(+)</text>
        <dbReference type="Rhea" id="RHEA:17521"/>
        <dbReference type="Rhea" id="RHEA-COMP:9681"/>
        <dbReference type="Rhea" id="RHEA-COMP:9684"/>
        <dbReference type="ChEBI" id="CHEBI:15377"/>
        <dbReference type="ChEBI" id="CHEBI:15378"/>
        <dbReference type="ChEBI" id="CHEBI:29985"/>
        <dbReference type="ChEBI" id="CHEBI:30616"/>
        <dbReference type="ChEBI" id="CHEBI:43474"/>
        <dbReference type="ChEBI" id="CHEBI:58359"/>
        <dbReference type="ChEBI" id="CHEBI:78520"/>
        <dbReference type="ChEBI" id="CHEBI:78521"/>
        <dbReference type="ChEBI" id="CHEBI:456216"/>
        <dbReference type="EC" id="6.3.5.7"/>
    </reaction>
</comment>
<comment type="subunit">
    <text evidence="1">Subunit of the heterotrimeric GatCAB amidotransferase (AdT) complex, composed of A, B and C subunits.</text>
</comment>
<comment type="subcellular location">
    <subcellularLocation>
        <location evidence="1">Mitochondrion</location>
    </subcellularLocation>
</comment>
<comment type="similarity">
    <text evidence="1">Belongs to the amidase family. GatA subfamily.</text>
</comment>
<name>GATA_DROPS</name>
<reference key="1">
    <citation type="journal article" date="2005" name="Genome Res.">
        <title>Comparative genome sequencing of Drosophila pseudoobscura: chromosomal, gene, and cis-element evolution.</title>
        <authorList>
            <person name="Richards S."/>
            <person name="Liu Y."/>
            <person name="Bettencourt B.R."/>
            <person name="Hradecky P."/>
            <person name="Letovsky S."/>
            <person name="Nielsen R."/>
            <person name="Thornton K."/>
            <person name="Hubisz M.J."/>
            <person name="Chen R."/>
            <person name="Meisel R.P."/>
            <person name="Couronne O."/>
            <person name="Hua S."/>
            <person name="Smith M.A."/>
            <person name="Zhang P."/>
            <person name="Liu J."/>
            <person name="Bussemaker H.J."/>
            <person name="van Batenburg M.F."/>
            <person name="Howells S.L."/>
            <person name="Scherer S.E."/>
            <person name="Sodergren E."/>
            <person name="Matthews B.B."/>
            <person name="Crosby M.A."/>
            <person name="Schroeder A.J."/>
            <person name="Ortiz-Barrientos D."/>
            <person name="Rives C.M."/>
            <person name="Metzker M.L."/>
            <person name="Muzny D.M."/>
            <person name="Scott G."/>
            <person name="Steffen D."/>
            <person name="Wheeler D.A."/>
            <person name="Worley K.C."/>
            <person name="Havlak P."/>
            <person name="Durbin K.J."/>
            <person name="Egan A."/>
            <person name="Gill R."/>
            <person name="Hume J."/>
            <person name="Morgan M.B."/>
            <person name="Miner G."/>
            <person name="Hamilton C."/>
            <person name="Huang Y."/>
            <person name="Waldron L."/>
            <person name="Verduzco D."/>
            <person name="Clerc-Blankenburg K.P."/>
            <person name="Dubchak I."/>
            <person name="Noor M.A.F."/>
            <person name="Anderson W."/>
            <person name="White K.P."/>
            <person name="Clark A.G."/>
            <person name="Schaeffer S.W."/>
            <person name="Gelbart W.M."/>
            <person name="Weinstock G.M."/>
            <person name="Gibbs R.A."/>
        </authorList>
    </citation>
    <scope>NUCLEOTIDE SEQUENCE [LARGE SCALE GENOMIC DNA]</scope>
    <source>
        <strain>MV2-25 / Tucson 14011-0121.94</strain>
    </source>
</reference>
<evidence type="ECO:0000255" key="1">
    <source>
        <dbReference type="HAMAP-Rule" id="MF_03150"/>
    </source>
</evidence>
<sequence length="507" mass="55547">MRRHLQWSIKQLTSSYADGQLSPRRVTEQALEDSVNLKTLNAFVRLTPEEARQQAQQSEQRYQKKQPSSGLDGVTIAIKDNFCTENVHTTCASRMLQDFVPPYDATVCSRLRQAGAVLLGKTNMDQFAMGAGTVDSIYGPTKNIWSEDLTQNNWRIAGGSSGGSASAVAAGLCFAGIGSDTGGSTRNPASYCGVVGLKPTYGLVSRHGLIPLVNSMDVPGILARSVSDCVEVLNAVAGPDGKDSTTIRQPFTKLQLPEVDGLDLQTVRIGIPKEYHCNGLSAEVLETWTKVADLLECAGASVQQVSLPNTAASIFVYSILNQCEVASNMARYDGIEFGHRAADERSTEQLYAQSRAEGFNDVVKTRILTGNFLLLRKNYDHYFEKALRVRRLIAEDFLKVFEAPSKEDRVDILLTPTTLTEAPLYKDFSSLSNRDQCAVQDFCTQPANMAGIPAVSIPIRLSRSGLPLSLQLMSRSLNEQLLLSVARWIEAQVAFDSLDHRLEQKLS</sequence>
<proteinExistence type="inferred from homology"/>
<keyword id="KW-0067">ATP-binding</keyword>
<keyword id="KW-0436">Ligase</keyword>
<keyword id="KW-0496">Mitochondrion</keyword>
<keyword id="KW-0547">Nucleotide-binding</keyword>
<keyword id="KW-0648">Protein biosynthesis</keyword>
<keyword id="KW-1185">Reference proteome</keyword>